<proteinExistence type="inferred from homology"/>
<organism>
    <name type="scientific">Escherichia fergusonii (strain ATCC 35469 / DSM 13698 / CCUG 18766 / IAM 14443 / JCM 21226 / LMG 7866 / NBRC 102419 / NCTC 12128 / CDC 0568-73)</name>
    <dbReference type="NCBI Taxonomy" id="585054"/>
    <lineage>
        <taxon>Bacteria</taxon>
        <taxon>Pseudomonadati</taxon>
        <taxon>Pseudomonadota</taxon>
        <taxon>Gammaproteobacteria</taxon>
        <taxon>Enterobacterales</taxon>
        <taxon>Enterobacteriaceae</taxon>
        <taxon>Escherichia</taxon>
    </lineage>
</organism>
<name>MSRA_ESCF3</name>
<gene>
    <name evidence="1" type="primary">msrA</name>
    <name type="ordered locus">EFER_4299</name>
</gene>
<accession>B7LMP0</accession>
<feature type="chain" id="PRO_1000145408" description="Peptide methionine sulfoxide reductase MsrA">
    <location>
        <begin position="1"/>
        <end position="212"/>
    </location>
</feature>
<feature type="active site" evidence="1">
    <location>
        <position position="52"/>
    </location>
</feature>
<comment type="function">
    <text evidence="1">Has an important function as a repair enzyme for proteins that have been inactivated by oxidation. Catalyzes the reversible oxidation-reduction of methionine sulfoxide in proteins to methionine.</text>
</comment>
<comment type="catalytic activity">
    <reaction evidence="1">
        <text>L-methionyl-[protein] + [thioredoxin]-disulfide + H2O = L-methionyl-(S)-S-oxide-[protein] + [thioredoxin]-dithiol</text>
        <dbReference type="Rhea" id="RHEA:14217"/>
        <dbReference type="Rhea" id="RHEA-COMP:10698"/>
        <dbReference type="Rhea" id="RHEA-COMP:10700"/>
        <dbReference type="Rhea" id="RHEA-COMP:12313"/>
        <dbReference type="Rhea" id="RHEA-COMP:12315"/>
        <dbReference type="ChEBI" id="CHEBI:15377"/>
        <dbReference type="ChEBI" id="CHEBI:16044"/>
        <dbReference type="ChEBI" id="CHEBI:29950"/>
        <dbReference type="ChEBI" id="CHEBI:44120"/>
        <dbReference type="ChEBI" id="CHEBI:50058"/>
        <dbReference type="EC" id="1.8.4.11"/>
    </reaction>
</comment>
<comment type="catalytic activity">
    <reaction evidence="1">
        <text>[thioredoxin]-disulfide + L-methionine + H2O = L-methionine (S)-S-oxide + [thioredoxin]-dithiol</text>
        <dbReference type="Rhea" id="RHEA:19993"/>
        <dbReference type="Rhea" id="RHEA-COMP:10698"/>
        <dbReference type="Rhea" id="RHEA-COMP:10700"/>
        <dbReference type="ChEBI" id="CHEBI:15377"/>
        <dbReference type="ChEBI" id="CHEBI:29950"/>
        <dbReference type="ChEBI" id="CHEBI:50058"/>
        <dbReference type="ChEBI" id="CHEBI:57844"/>
        <dbReference type="ChEBI" id="CHEBI:58772"/>
        <dbReference type="EC" id="1.8.4.11"/>
    </reaction>
</comment>
<comment type="similarity">
    <text evidence="1">Belongs to the MsrA Met sulfoxide reductase family.</text>
</comment>
<keyword id="KW-0560">Oxidoreductase</keyword>
<protein>
    <recommendedName>
        <fullName evidence="1">Peptide methionine sulfoxide reductase MsrA</fullName>
        <shortName evidence="1">Protein-methionine-S-oxide reductase</shortName>
        <ecNumber evidence="1">1.8.4.11</ecNumber>
    </recommendedName>
    <alternativeName>
        <fullName evidence="1">Peptide-methionine (S)-S-oxide reductase</fullName>
        <shortName evidence="1">Peptide Met(O) reductase</shortName>
    </alternativeName>
</protein>
<sequence>MSLFDKKHLVSPADALPGRNTPMPVATLHAVNGHSMTNVPDGMEIAIFAMGCFWGVERLFWQLPGVYSTAAGYTGGYTPNPTYREVCSGETGHAEAVRIVYDPSVISYEQLLQVFWENHDPAQGMRQGNDHGTQYRSAIYPLTPEQDSAARASRERFQAAMIAANDDRPVTTEIANATPFYYAEDDHQQYLHKNPYGYCGIGGIGVCLPPDA</sequence>
<evidence type="ECO:0000255" key="1">
    <source>
        <dbReference type="HAMAP-Rule" id="MF_01401"/>
    </source>
</evidence>
<dbReference type="EC" id="1.8.4.11" evidence="1"/>
<dbReference type="EMBL" id="CU928158">
    <property type="protein sequence ID" value="CAQ91718.1"/>
    <property type="molecule type" value="Genomic_DNA"/>
</dbReference>
<dbReference type="RefSeq" id="WP_002431723.1">
    <property type="nucleotide sequence ID" value="NC_011740.1"/>
</dbReference>
<dbReference type="SMR" id="B7LMP0"/>
<dbReference type="GeneID" id="75059114"/>
<dbReference type="KEGG" id="efe:EFER_4299"/>
<dbReference type="HOGENOM" id="CLU_031040_10_3_6"/>
<dbReference type="OrthoDB" id="4174719at2"/>
<dbReference type="Proteomes" id="UP000000745">
    <property type="component" value="Chromosome"/>
</dbReference>
<dbReference type="GO" id="GO:0005737">
    <property type="term" value="C:cytoplasm"/>
    <property type="evidence" value="ECO:0007669"/>
    <property type="project" value="TreeGrafter"/>
</dbReference>
<dbReference type="GO" id="GO:0036456">
    <property type="term" value="F:L-methionine-(S)-S-oxide reductase activity"/>
    <property type="evidence" value="ECO:0007669"/>
    <property type="project" value="TreeGrafter"/>
</dbReference>
<dbReference type="GO" id="GO:0008113">
    <property type="term" value="F:peptide-methionine (S)-S-oxide reductase activity"/>
    <property type="evidence" value="ECO:0007669"/>
    <property type="project" value="UniProtKB-UniRule"/>
</dbReference>
<dbReference type="GO" id="GO:0034599">
    <property type="term" value="P:cellular response to oxidative stress"/>
    <property type="evidence" value="ECO:0007669"/>
    <property type="project" value="TreeGrafter"/>
</dbReference>
<dbReference type="GO" id="GO:0036211">
    <property type="term" value="P:protein modification process"/>
    <property type="evidence" value="ECO:0007669"/>
    <property type="project" value="UniProtKB-UniRule"/>
</dbReference>
<dbReference type="FunFam" id="3.30.1060.10:FF:000001">
    <property type="entry name" value="Peptide methionine sulfoxide reductase MsrA"/>
    <property type="match status" value="1"/>
</dbReference>
<dbReference type="Gene3D" id="3.30.1060.10">
    <property type="entry name" value="Peptide methionine sulphoxide reductase MsrA"/>
    <property type="match status" value="1"/>
</dbReference>
<dbReference type="HAMAP" id="MF_01401">
    <property type="entry name" value="MsrA"/>
    <property type="match status" value="1"/>
</dbReference>
<dbReference type="InterPro" id="IPR002569">
    <property type="entry name" value="Met_Sox_Rdtase_MsrA_dom"/>
</dbReference>
<dbReference type="InterPro" id="IPR036509">
    <property type="entry name" value="Met_Sox_Rdtase_MsrA_sf"/>
</dbReference>
<dbReference type="InterPro" id="IPR050162">
    <property type="entry name" value="MsrA_MetSO_reductase"/>
</dbReference>
<dbReference type="NCBIfam" id="TIGR00401">
    <property type="entry name" value="msrA"/>
    <property type="match status" value="1"/>
</dbReference>
<dbReference type="PANTHER" id="PTHR42799">
    <property type="entry name" value="MITOCHONDRIAL PEPTIDE METHIONINE SULFOXIDE REDUCTASE"/>
    <property type="match status" value="1"/>
</dbReference>
<dbReference type="PANTHER" id="PTHR42799:SF2">
    <property type="entry name" value="MITOCHONDRIAL PEPTIDE METHIONINE SULFOXIDE REDUCTASE"/>
    <property type="match status" value="1"/>
</dbReference>
<dbReference type="Pfam" id="PF01625">
    <property type="entry name" value="PMSR"/>
    <property type="match status" value="1"/>
</dbReference>
<dbReference type="SUPFAM" id="SSF55068">
    <property type="entry name" value="Peptide methionine sulfoxide reductase"/>
    <property type="match status" value="1"/>
</dbReference>
<reference key="1">
    <citation type="journal article" date="2009" name="PLoS Genet.">
        <title>Organised genome dynamics in the Escherichia coli species results in highly diverse adaptive paths.</title>
        <authorList>
            <person name="Touchon M."/>
            <person name="Hoede C."/>
            <person name="Tenaillon O."/>
            <person name="Barbe V."/>
            <person name="Baeriswyl S."/>
            <person name="Bidet P."/>
            <person name="Bingen E."/>
            <person name="Bonacorsi S."/>
            <person name="Bouchier C."/>
            <person name="Bouvet O."/>
            <person name="Calteau A."/>
            <person name="Chiapello H."/>
            <person name="Clermont O."/>
            <person name="Cruveiller S."/>
            <person name="Danchin A."/>
            <person name="Diard M."/>
            <person name="Dossat C."/>
            <person name="Karoui M.E."/>
            <person name="Frapy E."/>
            <person name="Garry L."/>
            <person name="Ghigo J.M."/>
            <person name="Gilles A.M."/>
            <person name="Johnson J."/>
            <person name="Le Bouguenec C."/>
            <person name="Lescat M."/>
            <person name="Mangenot S."/>
            <person name="Martinez-Jehanne V."/>
            <person name="Matic I."/>
            <person name="Nassif X."/>
            <person name="Oztas S."/>
            <person name="Petit M.A."/>
            <person name="Pichon C."/>
            <person name="Rouy Z."/>
            <person name="Ruf C.S."/>
            <person name="Schneider D."/>
            <person name="Tourret J."/>
            <person name="Vacherie B."/>
            <person name="Vallenet D."/>
            <person name="Medigue C."/>
            <person name="Rocha E.P.C."/>
            <person name="Denamur E."/>
        </authorList>
    </citation>
    <scope>NUCLEOTIDE SEQUENCE [LARGE SCALE GENOMIC DNA]</scope>
    <source>
        <strain>ATCC 35469 / DSM 13698 / BCRC 15582 / CCUG 18766 / IAM 14443 / JCM 21226 / LMG 7866 / NBRC 102419 / NCTC 12128 / CDC 0568-73</strain>
    </source>
</reference>